<feature type="chain" id="PRO_1000185672" description="Lysophospholipid transporter LplT">
    <location>
        <begin position="1"/>
        <end position="397"/>
    </location>
</feature>
<feature type="topological domain" description="Periplasmic" evidence="1">
    <location>
        <begin position="1"/>
        <end position="17"/>
    </location>
</feature>
<feature type="transmembrane region" description="Helical" evidence="1">
    <location>
        <begin position="18"/>
        <end position="38"/>
    </location>
</feature>
<feature type="topological domain" description="Cytoplasmic" evidence="1">
    <location>
        <begin position="39"/>
        <end position="52"/>
    </location>
</feature>
<feature type="transmembrane region" description="Helical" evidence="1">
    <location>
        <begin position="53"/>
        <end position="73"/>
    </location>
</feature>
<feature type="topological domain" description="Periplasmic" evidence="1">
    <location>
        <begin position="74"/>
        <end position="90"/>
    </location>
</feature>
<feature type="transmembrane region" description="Helical" evidence="1">
    <location>
        <begin position="91"/>
        <end position="111"/>
    </location>
</feature>
<feature type="topological domain" description="Cytoplasmic" evidence="1">
    <location>
        <begin position="112"/>
        <end position="144"/>
    </location>
</feature>
<feature type="transmembrane region" description="Helical" evidence="1">
    <location>
        <begin position="145"/>
        <end position="165"/>
    </location>
</feature>
<feature type="topological domain" description="Periplasmic" evidence="1">
    <location>
        <position position="166"/>
    </location>
</feature>
<feature type="transmembrane region" description="Helical" evidence="1">
    <location>
        <begin position="167"/>
        <end position="187"/>
    </location>
</feature>
<feature type="topological domain" description="Cytoplasmic" evidence="1">
    <location>
        <begin position="188"/>
        <end position="226"/>
    </location>
</feature>
<feature type="transmembrane region" description="Helical" evidence="1">
    <location>
        <begin position="227"/>
        <end position="247"/>
    </location>
</feature>
<feature type="topological domain" description="Periplasmic" evidence="1">
    <location>
        <begin position="248"/>
        <end position="256"/>
    </location>
</feature>
<feature type="transmembrane region" description="Helical" evidence="1">
    <location>
        <begin position="257"/>
        <end position="277"/>
    </location>
</feature>
<feature type="topological domain" description="Cytoplasmic" evidence="1">
    <location>
        <begin position="278"/>
        <end position="280"/>
    </location>
</feature>
<feature type="transmembrane region" description="Helical" evidence="1">
    <location>
        <begin position="281"/>
        <end position="301"/>
    </location>
</feature>
<feature type="topological domain" description="Periplasmic" evidence="1">
    <location>
        <begin position="302"/>
        <end position="304"/>
    </location>
</feature>
<feature type="transmembrane region" description="Helical" evidence="1">
    <location>
        <begin position="305"/>
        <end position="325"/>
    </location>
</feature>
<feature type="topological domain" description="Cytoplasmic" evidence="1">
    <location>
        <begin position="326"/>
        <end position="343"/>
    </location>
</feature>
<feature type="transmembrane region" description="Helical" evidence="1">
    <location>
        <begin position="344"/>
        <end position="364"/>
    </location>
</feature>
<feature type="topological domain" description="Periplasmic" evidence="1">
    <location>
        <begin position="365"/>
        <end position="366"/>
    </location>
</feature>
<feature type="transmembrane region" description="Helical" evidence="1">
    <location>
        <begin position="367"/>
        <end position="387"/>
    </location>
</feature>
<feature type="topological domain" description="Cytoplasmic" evidence="1">
    <location>
        <begin position="388"/>
        <end position="397"/>
    </location>
</feature>
<gene>
    <name evidence="1" type="primary">lplT</name>
    <name type="ordered locus">ECED1_3291</name>
</gene>
<sequence>MSESVHTNTSLWSKGMKAVIVAQFLSAFGDNALLFATLALLKAQFYPEWSQPILQMVFVGAYILFAPFVGQVADSFAKGRVMMFANGLKLLGAASICFGINPFLGYTLVGVGAAAYSPAKYGILGELTTGSKLVKANGLMEASTIAAILLGSVAGGVLADWHILVALVACALAYGGAVVANIYIPKLAAARPGQSWNLISMTRSFLNACTSLWRNGETRFSLVGTSLFWGAGVTLRFLLVLWVPVALGITDNATPTYLNAMVAIGIVVGAGAAAKLVTLETVSRCMPAGILIGVVVLIFSLQHELLPAYALLMLIGVLGGFFVVPLNALLQERGKKSVGAGNAIAVQNLGENSAMLLMLGIYSLAVMVGIPVVPIGIGFGALFALAITALWIWQRRH</sequence>
<dbReference type="EMBL" id="CU928162">
    <property type="protein sequence ID" value="CAR09451.2"/>
    <property type="molecule type" value="Genomic_DNA"/>
</dbReference>
<dbReference type="RefSeq" id="WP_000004601.1">
    <property type="nucleotide sequence ID" value="NC_011745.1"/>
</dbReference>
<dbReference type="SMR" id="B7MZD4"/>
<dbReference type="KEGG" id="ecq:ECED1_3291"/>
<dbReference type="HOGENOM" id="CLU_047399_0_0_6"/>
<dbReference type="Proteomes" id="UP000000748">
    <property type="component" value="Chromosome"/>
</dbReference>
<dbReference type="GO" id="GO:0005886">
    <property type="term" value="C:plasma membrane"/>
    <property type="evidence" value="ECO:0007669"/>
    <property type="project" value="UniProtKB-SubCell"/>
</dbReference>
<dbReference type="GO" id="GO:0051978">
    <property type="term" value="F:lysophospholipid:sodium symporter activity"/>
    <property type="evidence" value="ECO:0007669"/>
    <property type="project" value="InterPro"/>
</dbReference>
<dbReference type="CDD" id="cd06173">
    <property type="entry name" value="MFS_MefA_like"/>
    <property type="match status" value="1"/>
</dbReference>
<dbReference type="FunFam" id="1.20.1250.20:FF:000091">
    <property type="entry name" value="Lysophospholipid transporter LplT"/>
    <property type="match status" value="1"/>
</dbReference>
<dbReference type="Gene3D" id="1.20.1250.20">
    <property type="entry name" value="MFS general substrate transporter like domains"/>
    <property type="match status" value="1"/>
</dbReference>
<dbReference type="HAMAP" id="MF_01585">
    <property type="entry name" value="MFS_LplT"/>
    <property type="match status" value="1"/>
</dbReference>
<dbReference type="InterPro" id="IPR023727">
    <property type="entry name" value="LysoPLipid__transptr_LplT"/>
</dbReference>
<dbReference type="InterPro" id="IPR011701">
    <property type="entry name" value="MFS"/>
</dbReference>
<dbReference type="InterPro" id="IPR036259">
    <property type="entry name" value="MFS_trans_sf"/>
</dbReference>
<dbReference type="NCBIfam" id="NF008397">
    <property type="entry name" value="PRK11195.1"/>
    <property type="match status" value="1"/>
</dbReference>
<dbReference type="PANTHER" id="PTHR43266">
    <property type="entry name" value="MACROLIDE-EFFLUX PROTEIN"/>
    <property type="match status" value="1"/>
</dbReference>
<dbReference type="PANTHER" id="PTHR43266:SF2">
    <property type="entry name" value="MAJOR FACILITATOR SUPERFAMILY (MFS) PROFILE DOMAIN-CONTAINING PROTEIN"/>
    <property type="match status" value="1"/>
</dbReference>
<dbReference type="Pfam" id="PF07690">
    <property type="entry name" value="MFS_1"/>
    <property type="match status" value="1"/>
</dbReference>
<dbReference type="SUPFAM" id="SSF103473">
    <property type="entry name" value="MFS general substrate transporter"/>
    <property type="match status" value="1"/>
</dbReference>
<name>LPLT_ECO81</name>
<keyword id="KW-0997">Cell inner membrane</keyword>
<keyword id="KW-1003">Cell membrane</keyword>
<keyword id="KW-0445">Lipid transport</keyword>
<keyword id="KW-0472">Membrane</keyword>
<keyword id="KW-0812">Transmembrane</keyword>
<keyword id="KW-1133">Transmembrane helix</keyword>
<keyword id="KW-0813">Transport</keyword>
<reference key="1">
    <citation type="journal article" date="2009" name="PLoS Genet.">
        <title>Organised genome dynamics in the Escherichia coli species results in highly diverse adaptive paths.</title>
        <authorList>
            <person name="Touchon M."/>
            <person name="Hoede C."/>
            <person name="Tenaillon O."/>
            <person name="Barbe V."/>
            <person name="Baeriswyl S."/>
            <person name="Bidet P."/>
            <person name="Bingen E."/>
            <person name="Bonacorsi S."/>
            <person name="Bouchier C."/>
            <person name="Bouvet O."/>
            <person name="Calteau A."/>
            <person name="Chiapello H."/>
            <person name="Clermont O."/>
            <person name="Cruveiller S."/>
            <person name="Danchin A."/>
            <person name="Diard M."/>
            <person name="Dossat C."/>
            <person name="Karoui M.E."/>
            <person name="Frapy E."/>
            <person name="Garry L."/>
            <person name="Ghigo J.M."/>
            <person name="Gilles A.M."/>
            <person name="Johnson J."/>
            <person name="Le Bouguenec C."/>
            <person name="Lescat M."/>
            <person name="Mangenot S."/>
            <person name="Martinez-Jehanne V."/>
            <person name="Matic I."/>
            <person name="Nassif X."/>
            <person name="Oztas S."/>
            <person name="Petit M.A."/>
            <person name="Pichon C."/>
            <person name="Rouy Z."/>
            <person name="Ruf C.S."/>
            <person name="Schneider D."/>
            <person name="Tourret J."/>
            <person name="Vacherie B."/>
            <person name="Vallenet D."/>
            <person name="Medigue C."/>
            <person name="Rocha E.P.C."/>
            <person name="Denamur E."/>
        </authorList>
    </citation>
    <scope>NUCLEOTIDE SEQUENCE [LARGE SCALE GENOMIC DNA]</scope>
    <source>
        <strain>ED1a</strain>
    </source>
</reference>
<proteinExistence type="inferred from homology"/>
<organism>
    <name type="scientific">Escherichia coli O81 (strain ED1a)</name>
    <dbReference type="NCBI Taxonomy" id="585397"/>
    <lineage>
        <taxon>Bacteria</taxon>
        <taxon>Pseudomonadati</taxon>
        <taxon>Pseudomonadota</taxon>
        <taxon>Gammaproteobacteria</taxon>
        <taxon>Enterobacterales</taxon>
        <taxon>Enterobacteriaceae</taxon>
        <taxon>Escherichia</taxon>
    </lineage>
</organism>
<evidence type="ECO:0000255" key="1">
    <source>
        <dbReference type="HAMAP-Rule" id="MF_01585"/>
    </source>
</evidence>
<protein>
    <recommendedName>
        <fullName evidence="1">Lysophospholipid transporter LplT</fullName>
    </recommendedName>
</protein>
<accession>B7MZD4</accession>
<comment type="function">
    <text evidence="1">Catalyzes the facilitated diffusion of 2-acyl-glycero-3-phosphoethanolamine (2-acyl-GPE) into the cell.</text>
</comment>
<comment type="subcellular location">
    <subcellularLocation>
        <location evidence="1">Cell inner membrane</location>
        <topology evidence="1">Multi-pass membrane protein</topology>
    </subcellularLocation>
</comment>
<comment type="similarity">
    <text evidence="1">Belongs to the major facilitator superfamily. LplT (TC 2.A.1.42) family.</text>
</comment>